<reference key="1">
    <citation type="submission" date="2007-02" db="EMBL/GenBank/DDBJ databases">
        <title>Complete sequence of Clostridium thermocellum ATCC 27405.</title>
        <authorList>
            <consortium name="US DOE Joint Genome Institute"/>
            <person name="Copeland A."/>
            <person name="Lucas S."/>
            <person name="Lapidus A."/>
            <person name="Barry K."/>
            <person name="Detter J.C."/>
            <person name="Glavina del Rio T."/>
            <person name="Hammon N."/>
            <person name="Israni S."/>
            <person name="Dalin E."/>
            <person name="Tice H."/>
            <person name="Pitluck S."/>
            <person name="Chertkov O."/>
            <person name="Brettin T."/>
            <person name="Bruce D."/>
            <person name="Han C."/>
            <person name="Tapia R."/>
            <person name="Gilna P."/>
            <person name="Schmutz J."/>
            <person name="Larimer F."/>
            <person name="Land M."/>
            <person name="Hauser L."/>
            <person name="Kyrpides N."/>
            <person name="Mikhailova N."/>
            <person name="Wu J.H.D."/>
            <person name="Newcomb M."/>
            <person name="Richardson P."/>
        </authorList>
    </citation>
    <scope>NUCLEOTIDE SEQUENCE [LARGE SCALE GENOMIC DNA]</scope>
    <source>
        <strain>ATCC 27405 / DSM 1237 / JCM 9322 / NBRC 103400 / NCIMB 10682 / NRRL B-4536 / VPI 7372</strain>
    </source>
</reference>
<sequence length="423" mass="48487">MLDIKLIRSNPEILKKALQKRKDNFDVNGLLSLDEKRRKTLVELEQLRNKQNENSKLIPKYKKEGKDVSSLMEEMKSLSEKIKALDAEVRKIDEELNAILLTIPNIPHESVPMGDSDEDNVEVRRWGEPRKFDFTPKPHWEIGENLDILDFSKAAKVTGARFTFYKGLGARLERALMNFMLDLHVDKHGYVEVFPPFLVHRNSMIGTGQLPKFEEDAFKVSDTDYFLIPTAEVPVTNMYREQILDVKDLPIKHVAYSACFRAEAGAAGRDTRGLIRQHQFNKVELVKFTTPETSYEELEKLTRDAEEVLQMLEIPYRVVKICVGDLGFTAAMKYDIEVWMPSYNRYVEISSCSNFEDFQARRAGIKFRRGLNEKPEFVHTLNGSGVAMGRATACILENYQQEDGSVVVPKVLREYLGGISVIK</sequence>
<name>SYS_ACET2</name>
<organism>
    <name type="scientific">Acetivibrio thermocellus (strain ATCC 27405 / DSM 1237 / JCM 9322 / NBRC 103400 / NCIMB 10682 / NRRL B-4536 / VPI 7372)</name>
    <name type="common">Clostridium thermocellum</name>
    <dbReference type="NCBI Taxonomy" id="203119"/>
    <lineage>
        <taxon>Bacteria</taxon>
        <taxon>Bacillati</taxon>
        <taxon>Bacillota</taxon>
        <taxon>Clostridia</taxon>
        <taxon>Eubacteriales</taxon>
        <taxon>Oscillospiraceae</taxon>
        <taxon>Acetivibrio</taxon>
    </lineage>
</organism>
<dbReference type="EC" id="6.1.1.11" evidence="1"/>
<dbReference type="EMBL" id="CP000568">
    <property type="protein sequence ID" value="ABN53583.1"/>
    <property type="molecule type" value="Genomic_DNA"/>
</dbReference>
<dbReference type="RefSeq" id="WP_003513301.1">
    <property type="nucleotide sequence ID" value="NC_009012.1"/>
</dbReference>
<dbReference type="SMR" id="A3DI04"/>
<dbReference type="STRING" id="203119.Cthe_2381"/>
<dbReference type="GeneID" id="35805411"/>
<dbReference type="KEGG" id="cth:Cthe_2381"/>
<dbReference type="eggNOG" id="COG0172">
    <property type="taxonomic scope" value="Bacteria"/>
</dbReference>
<dbReference type="HOGENOM" id="CLU_023797_1_1_9"/>
<dbReference type="OrthoDB" id="9804647at2"/>
<dbReference type="UniPathway" id="UPA00906">
    <property type="reaction ID" value="UER00895"/>
</dbReference>
<dbReference type="Proteomes" id="UP000002145">
    <property type="component" value="Chromosome"/>
</dbReference>
<dbReference type="GO" id="GO:0005737">
    <property type="term" value="C:cytoplasm"/>
    <property type="evidence" value="ECO:0007669"/>
    <property type="project" value="UniProtKB-SubCell"/>
</dbReference>
<dbReference type="GO" id="GO:0005524">
    <property type="term" value="F:ATP binding"/>
    <property type="evidence" value="ECO:0007669"/>
    <property type="project" value="UniProtKB-UniRule"/>
</dbReference>
<dbReference type="GO" id="GO:0140096">
    <property type="term" value="F:catalytic activity, acting on a protein"/>
    <property type="evidence" value="ECO:0007669"/>
    <property type="project" value="UniProtKB-ARBA"/>
</dbReference>
<dbReference type="GO" id="GO:0004828">
    <property type="term" value="F:serine-tRNA ligase activity"/>
    <property type="evidence" value="ECO:0007669"/>
    <property type="project" value="UniProtKB-UniRule"/>
</dbReference>
<dbReference type="GO" id="GO:0016740">
    <property type="term" value="F:transferase activity"/>
    <property type="evidence" value="ECO:0007669"/>
    <property type="project" value="UniProtKB-ARBA"/>
</dbReference>
<dbReference type="GO" id="GO:0016260">
    <property type="term" value="P:selenocysteine biosynthetic process"/>
    <property type="evidence" value="ECO:0007669"/>
    <property type="project" value="UniProtKB-UniRule"/>
</dbReference>
<dbReference type="GO" id="GO:0006434">
    <property type="term" value="P:seryl-tRNA aminoacylation"/>
    <property type="evidence" value="ECO:0007669"/>
    <property type="project" value="UniProtKB-UniRule"/>
</dbReference>
<dbReference type="CDD" id="cd00770">
    <property type="entry name" value="SerRS_core"/>
    <property type="match status" value="1"/>
</dbReference>
<dbReference type="Gene3D" id="3.30.930.10">
    <property type="entry name" value="Bira Bifunctional Protein, Domain 2"/>
    <property type="match status" value="1"/>
</dbReference>
<dbReference type="Gene3D" id="1.10.287.40">
    <property type="entry name" value="Serine-tRNA synthetase, tRNA binding domain"/>
    <property type="match status" value="1"/>
</dbReference>
<dbReference type="HAMAP" id="MF_00176">
    <property type="entry name" value="Ser_tRNA_synth_type1"/>
    <property type="match status" value="1"/>
</dbReference>
<dbReference type="InterPro" id="IPR002314">
    <property type="entry name" value="aa-tRNA-synt_IIb"/>
</dbReference>
<dbReference type="InterPro" id="IPR006195">
    <property type="entry name" value="aa-tRNA-synth_II"/>
</dbReference>
<dbReference type="InterPro" id="IPR045864">
    <property type="entry name" value="aa-tRNA-synth_II/BPL/LPL"/>
</dbReference>
<dbReference type="InterPro" id="IPR002317">
    <property type="entry name" value="Ser-tRNA-ligase_type_1"/>
</dbReference>
<dbReference type="InterPro" id="IPR015866">
    <property type="entry name" value="Ser-tRNA-synth_1_N"/>
</dbReference>
<dbReference type="InterPro" id="IPR042103">
    <property type="entry name" value="SerRS_1_N_sf"/>
</dbReference>
<dbReference type="InterPro" id="IPR033729">
    <property type="entry name" value="SerRS_core"/>
</dbReference>
<dbReference type="InterPro" id="IPR010978">
    <property type="entry name" value="tRNA-bd_arm"/>
</dbReference>
<dbReference type="NCBIfam" id="TIGR00414">
    <property type="entry name" value="serS"/>
    <property type="match status" value="1"/>
</dbReference>
<dbReference type="PANTHER" id="PTHR43697:SF1">
    <property type="entry name" value="SERINE--TRNA LIGASE"/>
    <property type="match status" value="1"/>
</dbReference>
<dbReference type="PANTHER" id="PTHR43697">
    <property type="entry name" value="SERYL-TRNA SYNTHETASE"/>
    <property type="match status" value="1"/>
</dbReference>
<dbReference type="Pfam" id="PF02403">
    <property type="entry name" value="Seryl_tRNA_N"/>
    <property type="match status" value="1"/>
</dbReference>
<dbReference type="Pfam" id="PF00587">
    <property type="entry name" value="tRNA-synt_2b"/>
    <property type="match status" value="1"/>
</dbReference>
<dbReference type="PIRSF" id="PIRSF001529">
    <property type="entry name" value="Ser-tRNA-synth_IIa"/>
    <property type="match status" value="1"/>
</dbReference>
<dbReference type="PRINTS" id="PR00981">
    <property type="entry name" value="TRNASYNTHSER"/>
</dbReference>
<dbReference type="SUPFAM" id="SSF55681">
    <property type="entry name" value="Class II aaRS and biotin synthetases"/>
    <property type="match status" value="1"/>
</dbReference>
<dbReference type="SUPFAM" id="SSF46589">
    <property type="entry name" value="tRNA-binding arm"/>
    <property type="match status" value="1"/>
</dbReference>
<dbReference type="PROSITE" id="PS50862">
    <property type="entry name" value="AA_TRNA_LIGASE_II"/>
    <property type="match status" value="1"/>
</dbReference>
<feature type="chain" id="PRO_1000019662" description="Serine--tRNA ligase">
    <location>
        <begin position="1"/>
        <end position="423"/>
    </location>
</feature>
<feature type="binding site" evidence="1">
    <location>
        <begin position="230"/>
        <end position="232"/>
    </location>
    <ligand>
        <name>L-serine</name>
        <dbReference type="ChEBI" id="CHEBI:33384"/>
    </ligand>
</feature>
<feature type="binding site" evidence="1">
    <location>
        <begin position="261"/>
        <end position="263"/>
    </location>
    <ligand>
        <name>ATP</name>
        <dbReference type="ChEBI" id="CHEBI:30616"/>
    </ligand>
</feature>
<feature type="binding site" evidence="1">
    <location>
        <position position="284"/>
    </location>
    <ligand>
        <name>L-serine</name>
        <dbReference type="ChEBI" id="CHEBI:33384"/>
    </ligand>
</feature>
<feature type="binding site" evidence="1">
    <location>
        <begin position="348"/>
        <end position="351"/>
    </location>
    <ligand>
        <name>ATP</name>
        <dbReference type="ChEBI" id="CHEBI:30616"/>
    </ligand>
</feature>
<feature type="binding site" evidence="1">
    <location>
        <position position="384"/>
    </location>
    <ligand>
        <name>L-serine</name>
        <dbReference type="ChEBI" id="CHEBI:33384"/>
    </ligand>
</feature>
<evidence type="ECO:0000255" key="1">
    <source>
        <dbReference type="HAMAP-Rule" id="MF_00176"/>
    </source>
</evidence>
<proteinExistence type="inferred from homology"/>
<keyword id="KW-0030">Aminoacyl-tRNA synthetase</keyword>
<keyword id="KW-0067">ATP-binding</keyword>
<keyword id="KW-0963">Cytoplasm</keyword>
<keyword id="KW-0436">Ligase</keyword>
<keyword id="KW-0547">Nucleotide-binding</keyword>
<keyword id="KW-0648">Protein biosynthesis</keyword>
<keyword id="KW-1185">Reference proteome</keyword>
<gene>
    <name evidence="1" type="primary">serS</name>
    <name type="ordered locus">Cthe_2381</name>
</gene>
<comment type="function">
    <text evidence="1">Catalyzes the attachment of serine to tRNA(Ser). Is also able to aminoacylate tRNA(Sec) with serine, to form the misacylated tRNA L-seryl-tRNA(Sec), which will be further converted into selenocysteinyl-tRNA(Sec).</text>
</comment>
<comment type="catalytic activity">
    <reaction evidence="1">
        <text>tRNA(Ser) + L-serine + ATP = L-seryl-tRNA(Ser) + AMP + diphosphate + H(+)</text>
        <dbReference type="Rhea" id="RHEA:12292"/>
        <dbReference type="Rhea" id="RHEA-COMP:9669"/>
        <dbReference type="Rhea" id="RHEA-COMP:9703"/>
        <dbReference type="ChEBI" id="CHEBI:15378"/>
        <dbReference type="ChEBI" id="CHEBI:30616"/>
        <dbReference type="ChEBI" id="CHEBI:33019"/>
        <dbReference type="ChEBI" id="CHEBI:33384"/>
        <dbReference type="ChEBI" id="CHEBI:78442"/>
        <dbReference type="ChEBI" id="CHEBI:78533"/>
        <dbReference type="ChEBI" id="CHEBI:456215"/>
        <dbReference type="EC" id="6.1.1.11"/>
    </reaction>
</comment>
<comment type="catalytic activity">
    <reaction evidence="1">
        <text>tRNA(Sec) + L-serine + ATP = L-seryl-tRNA(Sec) + AMP + diphosphate + H(+)</text>
        <dbReference type="Rhea" id="RHEA:42580"/>
        <dbReference type="Rhea" id="RHEA-COMP:9742"/>
        <dbReference type="Rhea" id="RHEA-COMP:10128"/>
        <dbReference type="ChEBI" id="CHEBI:15378"/>
        <dbReference type="ChEBI" id="CHEBI:30616"/>
        <dbReference type="ChEBI" id="CHEBI:33019"/>
        <dbReference type="ChEBI" id="CHEBI:33384"/>
        <dbReference type="ChEBI" id="CHEBI:78442"/>
        <dbReference type="ChEBI" id="CHEBI:78533"/>
        <dbReference type="ChEBI" id="CHEBI:456215"/>
        <dbReference type="EC" id="6.1.1.11"/>
    </reaction>
</comment>
<comment type="pathway">
    <text evidence="1">Aminoacyl-tRNA biosynthesis; selenocysteinyl-tRNA(Sec) biosynthesis; L-seryl-tRNA(Sec) from L-serine and tRNA(Sec): step 1/1.</text>
</comment>
<comment type="subunit">
    <text evidence="1">Homodimer. The tRNA molecule binds across the dimer.</text>
</comment>
<comment type="subcellular location">
    <subcellularLocation>
        <location evidence="1">Cytoplasm</location>
    </subcellularLocation>
</comment>
<comment type="domain">
    <text evidence="1">Consists of two distinct domains, a catalytic core and a N-terminal extension that is involved in tRNA binding.</text>
</comment>
<comment type="similarity">
    <text evidence="1">Belongs to the class-II aminoacyl-tRNA synthetase family. Type-1 seryl-tRNA synthetase subfamily.</text>
</comment>
<protein>
    <recommendedName>
        <fullName evidence="1">Serine--tRNA ligase</fullName>
        <ecNumber evidence="1">6.1.1.11</ecNumber>
    </recommendedName>
    <alternativeName>
        <fullName evidence="1">Seryl-tRNA synthetase</fullName>
        <shortName evidence="1">SerRS</shortName>
    </alternativeName>
    <alternativeName>
        <fullName evidence="1">Seryl-tRNA(Ser/Sec) synthetase</fullName>
    </alternativeName>
</protein>
<accession>A3DI04</accession>